<protein>
    <recommendedName>
        <fullName>Protein WWC2</fullName>
    </recommendedName>
    <alternativeName>
        <fullName>WW domain-containing protein 2</fullName>
    </alternativeName>
</protein>
<proteinExistence type="evidence at transcript level"/>
<evidence type="ECO:0000250" key="1">
    <source>
        <dbReference type="UniProtKB" id="Q6AWC2"/>
    </source>
</evidence>
<evidence type="ECO:0000255" key="2"/>
<evidence type="ECO:0000255" key="3">
    <source>
        <dbReference type="PROSITE-ProRule" id="PRU00041"/>
    </source>
</evidence>
<evidence type="ECO:0000255" key="4">
    <source>
        <dbReference type="PROSITE-ProRule" id="PRU00224"/>
    </source>
</evidence>
<evidence type="ECO:0000256" key="5">
    <source>
        <dbReference type="SAM" id="MobiDB-lite"/>
    </source>
</evidence>
<evidence type="ECO:0000305" key="6"/>
<feature type="chain" id="PRO_0000309492" description="Protein WWC2">
    <location>
        <begin position="1"/>
        <end position="1171"/>
    </location>
</feature>
<feature type="domain" description="WW 1" evidence="4">
    <location>
        <begin position="9"/>
        <end position="42"/>
    </location>
</feature>
<feature type="domain" description="WW 2" evidence="4">
    <location>
        <begin position="56"/>
        <end position="89"/>
    </location>
</feature>
<feature type="domain" description="C2" evidence="3">
    <location>
        <begin position="684"/>
        <end position="806"/>
    </location>
</feature>
<feature type="region of interest" description="Disordered" evidence="5">
    <location>
        <begin position="521"/>
        <end position="552"/>
    </location>
</feature>
<feature type="region of interest" description="Disordered" evidence="5">
    <location>
        <begin position="603"/>
        <end position="637"/>
    </location>
</feature>
<feature type="coiled-coil region" evidence="2">
    <location>
        <begin position="120"/>
        <end position="193"/>
    </location>
</feature>
<feature type="coiled-coil region" evidence="2">
    <location>
        <begin position="223"/>
        <end position="257"/>
    </location>
</feature>
<feature type="coiled-coil region" evidence="2">
    <location>
        <begin position="301"/>
        <end position="420"/>
    </location>
</feature>
<feature type="coiled-coil region" evidence="2">
    <location>
        <begin position="836"/>
        <end position="870"/>
    </location>
</feature>
<feature type="coiled-coil region" evidence="2">
    <location>
        <begin position="1047"/>
        <end position="1123"/>
    </location>
</feature>
<feature type="compositionally biased region" description="Low complexity" evidence="5">
    <location>
        <begin position="534"/>
        <end position="551"/>
    </location>
</feature>
<feature type="compositionally biased region" description="Basic and acidic residues" evidence="5">
    <location>
        <begin position="606"/>
        <end position="616"/>
    </location>
</feature>
<feature type="compositionally biased region" description="Basic and acidic residues" evidence="5">
    <location>
        <begin position="625"/>
        <end position="637"/>
    </location>
</feature>
<comment type="function">
    <text evidence="1">Negative regulator of the Hippo signaling pathway, also known as the Salvador-Warts-Hippo (SWH) pathway.</text>
</comment>
<comment type="subcellular location">
    <subcellularLocation>
        <location evidence="1">Cytoplasm</location>
        <location evidence="1">Cytosol</location>
    </subcellularLocation>
</comment>
<comment type="similarity">
    <text evidence="6">Belongs to the WWC family.</text>
</comment>
<gene>
    <name type="primary">wwc2</name>
</gene>
<sequence length="1171" mass="132392">MPRKGNGQLPLPDGWEEARDYDGKVFYIDHNSRQTSWIDPRDRLTKPLSFADCVGNELPWGWESSYDPQIGVYFINHINQTTQIEDPRKLWRNEQERMLKDYLMVAQDALSTQKELYHIKEQRLALALDEYVRLNDAYKEKSSSRTSLFSGSSSSTKYDPDILKAEISTTKVRVKKLKRELSQMKQELLYKEQGFETLQRIDQKMSGGQSGYELREAKDILSELKSIRKAISTGEKEKQDLMQSLVKLKERFHLEEARGRSEPDLRSNLANSHLSLSRQTLDAGSQTDISGDIGVRSRSNLAEKVRLSLQYEEAKRSMANLKIELAKLDSEAWPGALDVEKEKLMLINEKEELLKELQFVTTRRRTQGEIERLEGERRRLEEELLSVKSSPSKALAEQLKIQEKKKELVKKLEEVTKSATYLHSQLKSLSASTLSVSSGSSIGSLASSRGSLNTSSRGSLNSLSSTDLYYNQNEPAADLDYQYKLDFLLQEKSGYIPCGPITTIHENEVVHCHERIDYTNSPTAQQDTQDAKPPKSVTSLSSLSSLSSLSPPGSPPVLEGVFSLCTQDSLRTGFEISELPESFADMNLHENLQLMESVAGESQALAERKSTGEGLRHQSSASQEGRTDIEFPRKNPDRVQEEKAMCVSAAVSDESVAGDSGVYEPSVKPPGEDPVFNDDYSILGAAQAQLILRYDSGNSSFVIIIVKARNNLSYVQFGSRIYFRVAVLPSSNDTSCLFRTKVYPATESVLFNELFRVSISQTTLQQKTLRVDMCSVGKTHREDCLAGTQISLADFSFSNDVHTQWYTLLPSRTIPLHKEQLEKSVLSASNTQTAALDLDAVSALLERTSAELEAVEQELAQEDDDQEQLCPGDDWPEMAPEESFSTLEEHEADLLLSGEYYAVPLQLSSETTEKSEELYGETSNWDSVVSPLPQAELPTLVDKETNTEEALQENLSVRPKERANLGSRQRPFVRNSMIVRSQTFSPGEKNQYICRLNRSDSDSSTLAKKSPFIRNANERRSLRVKRPICQPMTRRTVHECRERTSLDLELDLQASLTRQSRLNDELQSLRDLKQRLEEMKARGETELPTCVLEDERFQRLLKQAEKQAEQSKEEQKQGLNAEKLMRKASKDVCRLREQSQKVPLQVQSFREKITYFTRAKISIPSLSADDV</sequence>
<organism>
    <name type="scientific">Xenopus tropicalis</name>
    <name type="common">Western clawed frog</name>
    <name type="synonym">Silurana tropicalis</name>
    <dbReference type="NCBI Taxonomy" id="8364"/>
    <lineage>
        <taxon>Eukaryota</taxon>
        <taxon>Metazoa</taxon>
        <taxon>Chordata</taxon>
        <taxon>Craniata</taxon>
        <taxon>Vertebrata</taxon>
        <taxon>Euteleostomi</taxon>
        <taxon>Amphibia</taxon>
        <taxon>Batrachia</taxon>
        <taxon>Anura</taxon>
        <taxon>Pipoidea</taxon>
        <taxon>Pipidae</taxon>
        <taxon>Xenopodinae</taxon>
        <taxon>Xenopus</taxon>
        <taxon>Silurana</taxon>
    </lineage>
</organism>
<name>WWC2_XENTR</name>
<reference key="1">
    <citation type="submission" date="2004-06" db="EMBL/GenBank/DDBJ databases">
        <authorList>
            <consortium name="NIH - Xenopus Gene Collection (XGC) project"/>
        </authorList>
    </citation>
    <scope>NUCLEOTIDE SEQUENCE [LARGE SCALE MRNA]</scope>
    <source>
        <tissue>Embryo</tissue>
    </source>
</reference>
<keyword id="KW-0175">Coiled coil</keyword>
<keyword id="KW-0963">Cytoplasm</keyword>
<keyword id="KW-1185">Reference proteome</keyword>
<keyword id="KW-0677">Repeat</keyword>
<keyword id="KW-0678">Repressor</keyword>
<keyword id="KW-0804">Transcription</keyword>
<keyword id="KW-0805">Transcription regulation</keyword>
<accession>Q6DJR2</accession>
<dbReference type="EMBL" id="BC075112">
    <property type="protein sequence ID" value="AAH75112.1"/>
    <property type="molecule type" value="mRNA"/>
</dbReference>
<dbReference type="RefSeq" id="NP_001004872.1">
    <property type="nucleotide sequence ID" value="NM_001004872.1"/>
</dbReference>
<dbReference type="SMR" id="Q6DJR2"/>
<dbReference type="FunCoup" id="Q6DJR2">
    <property type="interactions" value="1005"/>
</dbReference>
<dbReference type="STRING" id="8364.ENSXETP00000014497"/>
<dbReference type="PaxDb" id="8364-ENSXETP00000030868"/>
<dbReference type="GeneID" id="448191"/>
<dbReference type="KEGG" id="xtr:448191"/>
<dbReference type="AGR" id="Xenbase:XB-GENE-1001637"/>
<dbReference type="CTD" id="80014"/>
<dbReference type="Xenbase" id="XB-GENE-1001637">
    <property type="gene designation" value="wwc2"/>
</dbReference>
<dbReference type="eggNOG" id="KOG3209">
    <property type="taxonomic scope" value="Eukaryota"/>
</dbReference>
<dbReference type="InParanoid" id="Q6DJR2"/>
<dbReference type="OMA" id="FHLDQNM"/>
<dbReference type="OrthoDB" id="2020426at2759"/>
<dbReference type="Proteomes" id="UP000008143">
    <property type="component" value="Chromosome 1"/>
</dbReference>
<dbReference type="GO" id="GO:0005829">
    <property type="term" value="C:cytosol"/>
    <property type="evidence" value="ECO:0007669"/>
    <property type="project" value="UniProtKB-SubCell"/>
</dbReference>
<dbReference type="GO" id="GO:0008285">
    <property type="term" value="P:negative regulation of cell population proliferation"/>
    <property type="evidence" value="ECO:0000250"/>
    <property type="project" value="UniProtKB"/>
</dbReference>
<dbReference type="CDD" id="cd08680">
    <property type="entry name" value="C2_Kibra"/>
    <property type="match status" value="1"/>
</dbReference>
<dbReference type="CDD" id="cd00201">
    <property type="entry name" value="WW"/>
    <property type="match status" value="2"/>
</dbReference>
<dbReference type="FunFam" id="2.20.70.10:FF:000041">
    <property type="entry name" value="WW and C2 domain containing 1"/>
    <property type="match status" value="1"/>
</dbReference>
<dbReference type="Gene3D" id="2.20.70.10">
    <property type="match status" value="2"/>
</dbReference>
<dbReference type="Gene3D" id="2.60.40.150">
    <property type="entry name" value="C2 domain"/>
    <property type="match status" value="1"/>
</dbReference>
<dbReference type="InterPro" id="IPR000008">
    <property type="entry name" value="C2_dom"/>
</dbReference>
<dbReference type="InterPro" id="IPR035892">
    <property type="entry name" value="C2_domain_sf"/>
</dbReference>
<dbReference type="InterPro" id="IPR037771">
    <property type="entry name" value="C2_WWC"/>
</dbReference>
<dbReference type="InterPro" id="IPR001202">
    <property type="entry name" value="WW_dom"/>
</dbReference>
<dbReference type="InterPro" id="IPR036020">
    <property type="entry name" value="WW_dom_sf"/>
</dbReference>
<dbReference type="InterPro" id="IPR051105">
    <property type="entry name" value="WWC/KIBRA_Hippo_Reg"/>
</dbReference>
<dbReference type="PANTHER" id="PTHR14791">
    <property type="entry name" value="BOMB/KIRA PROTEINS"/>
    <property type="match status" value="1"/>
</dbReference>
<dbReference type="PANTHER" id="PTHR14791:SF26">
    <property type="entry name" value="PROTEIN WWC2"/>
    <property type="match status" value="1"/>
</dbReference>
<dbReference type="Pfam" id="PF00168">
    <property type="entry name" value="C2"/>
    <property type="match status" value="1"/>
</dbReference>
<dbReference type="Pfam" id="PF00397">
    <property type="entry name" value="WW"/>
    <property type="match status" value="2"/>
</dbReference>
<dbReference type="SMART" id="SM00456">
    <property type="entry name" value="WW"/>
    <property type="match status" value="2"/>
</dbReference>
<dbReference type="SUPFAM" id="SSF49562">
    <property type="entry name" value="C2 domain (Calcium/lipid-binding domain, CaLB)"/>
    <property type="match status" value="1"/>
</dbReference>
<dbReference type="SUPFAM" id="SSF51045">
    <property type="entry name" value="WW domain"/>
    <property type="match status" value="2"/>
</dbReference>
<dbReference type="PROSITE" id="PS50004">
    <property type="entry name" value="C2"/>
    <property type="match status" value="1"/>
</dbReference>
<dbReference type="PROSITE" id="PS01159">
    <property type="entry name" value="WW_DOMAIN_1"/>
    <property type="match status" value="1"/>
</dbReference>
<dbReference type="PROSITE" id="PS50020">
    <property type="entry name" value="WW_DOMAIN_2"/>
    <property type="match status" value="2"/>
</dbReference>